<gene>
    <name evidence="1" type="primary">prs</name>
    <name type="ordered locus">Mmar10_0759</name>
</gene>
<dbReference type="EC" id="2.7.6.1" evidence="1"/>
<dbReference type="EMBL" id="CP000449">
    <property type="protein sequence ID" value="ABI65052.1"/>
    <property type="molecule type" value="Genomic_DNA"/>
</dbReference>
<dbReference type="RefSeq" id="WP_011642699.1">
    <property type="nucleotide sequence ID" value="NC_008347.1"/>
</dbReference>
<dbReference type="SMR" id="Q0ARN5"/>
<dbReference type="STRING" id="394221.Mmar10_0759"/>
<dbReference type="KEGG" id="mmr:Mmar10_0759"/>
<dbReference type="eggNOG" id="COG0462">
    <property type="taxonomic scope" value="Bacteria"/>
</dbReference>
<dbReference type="HOGENOM" id="CLU_033546_4_0_5"/>
<dbReference type="OrthoDB" id="9777067at2"/>
<dbReference type="UniPathway" id="UPA00087">
    <property type="reaction ID" value="UER00172"/>
</dbReference>
<dbReference type="Proteomes" id="UP000001964">
    <property type="component" value="Chromosome"/>
</dbReference>
<dbReference type="GO" id="GO:0005737">
    <property type="term" value="C:cytoplasm"/>
    <property type="evidence" value="ECO:0007669"/>
    <property type="project" value="UniProtKB-SubCell"/>
</dbReference>
<dbReference type="GO" id="GO:0002189">
    <property type="term" value="C:ribose phosphate diphosphokinase complex"/>
    <property type="evidence" value="ECO:0007669"/>
    <property type="project" value="TreeGrafter"/>
</dbReference>
<dbReference type="GO" id="GO:0005524">
    <property type="term" value="F:ATP binding"/>
    <property type="evidence" value="ECO:0007669"/>
    <property type="project" value="UniProtKB-KW"/>
</dbReference>
<dbReference type="GO" id="GO:0016301">
    <property type="term" value="F:kinase activity"/>
    <property type="evidence" value="ECO:0007669"/>
    <property type="project" value="UniProtKB-KW"/>
</dbReference>
<dbReference type="GO" id="GO:0000287">
    <property type="term" value="F:magnesium ion binding"/>
    <property type="evidence" value="ECO:0007669"/>
    <property type="project" value="UniProtKB-UniRule"/>
</dbReference>
<dbReference type="GO" id="GO:0004749">
    <property type="term" value="F:ribose phosphate diphosphokinase activity"/>
    <property type="evidence" value="ECO:0007669"/>
    <property type="project" value="UniProtKB-UniRule"/>
</dbReference>
<dbReference type="GO" id="GO:0006015">
    <property type="term" value="P:5-phosphoribose 1-diphosphate biosynthetic process"/>
    <property type="evidence" value="ECO:0007669"/>
    <property type="project" value="UniProtKB-UniRule"/>
</dbReference>
<dbReference type="GO" id="GO:0006164">
    <property type="term" value="P:purine nucleotide biosynthetic process"/>
    <property type="evidence" value="ECO:0007669"/>
    <property type="project" value="TreeGrafter"/>
</dbReference>
<dbReference type="GO" id="GO:0009156">
    <property type="term" value="P:ribonucleoside monophosphate biosynthetic process"/>
    <property type="evidence" value="ECO:0007669"/>
    <property type="project" value="InterPro"/>
</dbReference>
<dbReference type="CDD" id="cd06223">
    <property type="entry name" value="PRTases_typeI"/>
    <property type="match status" value="1"/>
</dbReference>
<dbReference type="FunFam" id="3.40.50.2020:FF:000001">
    <property type="entry name" value="Ribose-phosphate pyrophosphokinase"/>
    <property type="match status" value="1"/>
</dbReference>
<dbReference type="Gene3D" id="3.40.50.2020">
    <property type="match status" value="2"/>
</dbReference>
<dbReference type="HAMAP" id="MF_00583_B">
    <property type="entry name" value="RibP_PPkinase_B"/>
    <property type="match status" value="1"/>
</dbReference>
<dbReference type="InterPro" id="IPR000842">
    <property type="entry name" value="PRib_PP_synth_CS"/>
</dbReference>
<dbReference type="InterPro" id="IPR029099">
    <property type="entry name" value="Pribosyltran_N"/>
</dbReference>
<dbReference type="InterPro" id="IPR000836">
    <property type="entry name" value="PRibTrfase_dom"/>
</dbReference>
<dbReference type="InterPro" id="IPR029057">
    <property type="entry name" value="PRTase-like"/>
</dbReference>
<dbReference type="InterPro" id="IPR005946">
    <property type="entry name" value="Rib-P_diPkinase"/>
</dbReference>
<dbReference type="InterPro" id="IPR037515">
    <property type="entry name" value="Rib-P_diPkinase_bac"/>
</dbReference>
<dbReference type="NCBIfam" id="NF002320">
    <property type="entry name" value="PRK01259.1"/>
    <property type="match status" value="1"/>
</dbReference>
<dbReference type="NCBIfam" id="TIGR01251">
    <property type="entry name" value="ribP_PPkin"/>
    <property type="match status" value="1"/>
</dbReference>
<dbReference type="PANTHER" id="PTHR10210">
    <property type="entry name" value="RIBOSE-PHOSPHATE DIPHOSPHOKINASE FAMILY MEMBER"/>
    <property type="match status" value="1"/>
</dbReference>
<dbReference type="PANTHER" id="PTHR10210:SF41">
    <property type="entry name" value="RIBOSE-PHOSPHATE PYROPHOSPHOKINASE 1, CHLOROPLASTIC"/>
    <property type="match status" value="1"/>
</dbReference>
<dbReference type="Pfam" id="PF14572">
    <property type="entry name" value="Pribosyl_synth"/>
    <property type="match status" value="1"/>
</dbReference>
<dbReference type="Pfam" id="PF13793">
    <property type="entry name" value="Pribosyltran_N"/>
    <property type="match status" value="1"/>
</dbReference>
<dbReference type="SMART" id="SM01400">
    <property type="entry name" value="Pribosyltran_N"/>
    <property type="match status" value="1"/>
</dbReference>
<dbReference type="SUPFAM" id="SSF53271">
    <property type="entry name" value="PRTase-like"/>
    <property type="match status" value="1"/>
</dbReference>
<dbReference type="PROSITE" id="PS00114">
    <property type="entry name" value="PRPP_SYNTHASE"/>
    <property type="match status" value="1"/>
</dbReference>
<name>KPRS_MARMM</name>
<sequence length="310" mass="33732">MKLMSGTANPDLSRSIADYLDAPLTASHIERFADGEIFVRIDENVRGEDVFILQSTSRPANDHLMELLICIDALVRASARRITAVIPYFGYARQDRKTGGRTPISAKLVANLIAKAGADRVLTVDLHAGQIQGFFDIPTDNLFATKVMEADIRRHYETDNLLIVSPDVGGVVRARALAKLLDAEIAIVDKRRPKAGVAEVMNIIGEVEGRRCILFDDMCDSGGTLVNAADALLEKGAIEVSAYVTHGVLSKDAQGRVDKSRLRELVVTDSVTEPPNSTATPKVRRLSVAPLLGEAIRRIANDESVSKLFD</sequence>
<protein>
    <recommendedName>
        <fullName evidence="1">Ribose-phosphate pyrophosphokinase</fullName>
        <shortName evidence="1">RPPK</shortName>
        <ecNumber evidence="1">2.7.6.1</ecNumber>
    </recommendedName>
    <alternativeName>
        <fullName evidence="1">5-phospho-D-ribosyl alpha-1-diphosphate synthase</fullName>
    </alternativeName>
    <alternativeName>
        <fullName evidence="1">Phosphoribosyl diphosphate synthase</fullName>
    </alternativeName>
    <alternativeName>
        <fullName evidence="1">Phosphoribosyl pyrophosphate synthase</fullName>
        <shortName evidence="1">P-Rib-PP synthase</shortName>
        <shortName evidence="1">PRPP synthase</shortName>
        <shortName evidence="1">PRPPase</shortName>
    </alternativeName>
</protein>
<feature type="chain" id="PRO_1000025453" description="Ribose-phosphate pyrophosphokinase">
    <location>
        <begin position="1"/>
        <end position="310"/>
    </location>
</feature>
<feature type="active site" evidence="1">
    <location>
        <position position="190"/>
    </location>
</feature>
<feature type="binding site" evidence="1">
    <location>
        <begin position="34"/>
        <end position="36"/>
    </location>
    <ligand>
        <name>ATP</name>
        <dbReference type="ChEBI" id="CHEBI:30616"/>
    </ligand>
</feature>
<feature type="binding site" evidence="1">
    <location>
        <begin position="93"/>
        <end position="94"/>
    </location>
    <ligand>
        <name>ATP</name>
        <dbReference type="ChEBI" id="CHEBI:30616"/>
    </ligand>
</feature>
<feature type="binding site" evidence="1">
    <location>
        <position position="127"/>
    </location>
    <ligand>
        <name>Mg(2+)</name>
        <dbReference type="ChEBI" id="CHEBI:18420"/>
        <label>1</label>
    </ligand>
</feature>
<feature type="binding site" evidence="1">
    <location>
        <position position="167"/>
    </location>
    <ligand>
        <name>Mg(2+)</name>
        <dbReference type="ChEBI" id="CHEBI:18420"/>
        <label>2</label>
    </ligand>
</feature>
<feature type="binding site" evidence="1">
    <location>
        <position position="192"/>
    </location>
    <ligand>
        <name>D-ribose 5-phosphate</name>
        <dbReference type="ChEBI" id="CHEBI:78346"/>
    </ligand>
</feature>
<feature type="binding site" evidence="1">
    <location>
        <position position="216"/>
    </location>
    <ligand>
        <name>D-ribose 5-phosphate</name>
        <dbReference type="ChEBI" id="CHEBI:78346"/>
    </ligand>
</feature>
<feature type="binding site" evidence="1">
    <location>
        <begin position="220"/>
        <end position="224"/>
    </location>
    <ligand>
        <name>D-ribose 5-phosphate</name>
        <dbReference type="ChEBI" id="CHEBI:78346"/>
    </ligand>
</feature>
<accession>Q0ARN5</accession>
<comment type="function">
    <text evidence="1">Involved in the biosynthesis of the central metabolite phospho-alpha-D-ribosyl-1-pyrophosphate (PRPP) via the transfer of pyrophosphoryl group from ATP to 1-hydroxyl of ribose-5-phosphate (Rib-5-P).</text>
</comment>
<comment type="catalytic activity">
    <reaction evidence="1">
        <text>D-ribose 5-phosphate + ATP = 5-phospho-alpha-D-ribose 1-diphosphate + AMP + H(+)</text>
        <dbReference type="Rhea" id="RHEA:15609"/>
        <dbReference type="ChEBI" id="CHEBI:15378"/>
        <dbReference type="ChEBI" id="CHEBI:30616"/>
        <dbReference type="ChEBI" id="CHEBI:58017"/>
        <dbReference type="ChEBI" id="CHEBI:78346"/>
        <dbReference type="ChEBI" id="CHEBI:456215"/>
        <dbReference type="EC" id="2.7.6.1"/>
    </reaction>
</comment>
<comment type="cofactor">
    <cofactor evidence="1">
        <name>Mg(2+)</name>
        <dbReference type="ChEBI" id="CHEBI:18420"/>
    </cofactor>
    <text evidence="1">Binds 2 Mg(2+) ions per subunit.</text>
</comment>
<comment type="pathway">
    <text evidence="1">Metabolic intermediate biosynthesis; 5-phospho-alpha-D-ribose 1-diphosphate biosynthesis; 5-phospho-alpha-D-ribose 1-diphosphate from D-ribose 5-phosphate (route I): step 1/1.</text>
</comment>
<comment type="subunit">
    <text evidence="1">Homohexamer.</text>
</comment>
<comment type="subcellular location">
    <subcellularLocation>
        <location evidence="1">Cytoplasm</location>
    </subcellularLocation>
</comment>
<comment type="similarity">
    <text evidence="1">Belongs to the ribose-phosphate pyrophosphokinase family. Class I subfamily.</text>
</comment>
<proteinExistence type="inferred from homology"/>
<evidence type="ECO:0000255" key="1">
    <source>
        <dbReference type="HAMAP-Rule" id="MF_00583"/>
    </source>
</evidence>
<organism>
    <name type="scientific">Maricaulis maris (strain MCS10)</name>
    <name type="common">Caulobacter maris</name>
    <dbReference type="NCBI Taxonomy" id="394221"/>
    <lineage>
        <taxon>Bacteria</taxon>
        <taxon>Pseudomonadati</taxon>
        <taxon>Pseudomonadota</taxon>
        <taxon>Alphaproteobacteria</taxon>
        <taxon>Maricaulales</taxon>
        <taxon>Maricaulaceae</taxon>
        <taxon>Maricaulis</taxon>
    </lineage>
</organism>
<keyword id="KW-0067">ATP-binding</keyword>
<keyword id="KW-0963">Cytoplasm</keyword>
<keyword id="KW-0418">Kinase</keyword>
<keyword id="KW-0460">Magnesium</keyword>
<keyword id="KW-0479">Metal-binding</keyword>
<keyword id="KW-0545">Nucleotide biosynthesis</keyword>
<keyword id="KW-0547">Nucleotide-binding</keyword>
<keyword id="KW-1185">Reference proteome</keyword>
<keyword id="KW-0808">Transferase</keyword>
<reference key="1">
    <citation type="submission" date="2006-08" db="EMBL/GenBank/DDBJ databases">
        <title>Complete sequence of Maricaulis maris MCS10.</title>
        <authorList>
            <consortium name="US DOE Joint Genome Institute"/>
            <person name="Copeland A."/>
            <person name="Lucas S."/>
            <person name="Lapidus A."/>
            <person name="Barry K."/>
            <person name="Detter J.C."/>
            <person name="Glavina del Rio T."/>
            <person name="Hammon N."/>
            <person name="Israni S."/>
            <person name="Dalin E."/>
            <person name="Tice H."/>
            <person name="Pitluck S."/>
            <person name="Saunders E."/>
            <person name="Brettin T."/>
            <person name="Bruce D."/>
            <person name="Han C."/>
            <person name="Tapia R."/>
            <person name="Gilna P."/>
            <person name="Schmutz J."/>
            <person name="Larimer F."/>
            <person name="Land M."/>
            <person name="Hauser L."/>
            <person name="Kyrpides N."/>
            <person name="Mikhailova N."/>
            <person name="Viollier P."/>
            <person name="Stephens C."/>
            <person name="Richardson P."/>
        </authorList>
    </citation>
    <scope>NUCLEOTIDE SEQUENCE [LARGE SCALE GENOMIC DNA]</scope>
    <source>
        <strain>MCS10</strain>
    </source>
</reference>